<dbReference type="EMBL" id="Z48045">
    <property type="protein sequence ID" value="CAI46557.1"/>
    <property type="molecule type" value="Genomic_DNA"/>
</dbReference>
<dbReference type="RefSeq" id="NP_001022022.1">
    <property type="nucleotide sequence ID" value="NM_001026851.6"/>
</dbReference>
<dbReference type="BioGRID" id="531955">
    <property type="interactions" value="1"/>
</dbReference>
<dbReference type="FunCoup" id="Q5FC79">
    <property type="interactions" value="449"/>
</dbReference>
<dbReference type="STRING" id="6239.C41C4.10a.1"/>
<dbReference type="PaxDb" id="6239-C41C4.10"/>
<dbReference type="PeptideAtlas" id="Q5FC79"/>
<dbReference type="EnsemblMetazoa" id="C41C4.10a.1">
    <property type="protein sequence ID" value="C41C4.10a.1"/>
    <property type="gene ID" value="WBGene00044049"/>
</dbReference>
<dbReference type="GeneID" id="174303"/>
<dbReference type="KEGG" id="cel:CELE_C41C4.10"/>
<dbReference type="AGR" id="WB:WBGene00044049"/>
<dbReference type="CTD" id="174303"/>
<dbReference type="WormBase" id="C41C4.10a">
    <property type="protein sequence ID" value="CE37882"/>
    <property type="gene ID" value="WBGene00044049"/>
    <property type="gene designation" value="sfxn-5"/>
</dbReference>
<dbReference type="eggNOG" id="KOG3767">
    <property type="taxonomic scope" value="Eukaryota"/>
</dbReference>
<dbReference type="GeneTree" id="ENSGT01030000234641"/>
<dbReference type="HOGENOM" id="CLU_039425_2_1_1"/>
<dbReference type="InParanoid" id="Q5FC79"/>
<dbReference type="OMA" id="GTTIFWQ"/>
<dbReference type="OrthoDB" id="6608471at2759"/>
<dbReference type="PhylomeDB" id="Q5FC79"/>
<dbReference type="PRO" id="PR:Q5FC79"/>
<dbReference type="Proteomes" id="UP000001940">
    <property type="component" value="Chromosome II"/>
</dbReference>
<dbReference type="Bgee" id="WBGene00044049">
    <property type="expression patterns" value="Expressed in larva and 3 other cell types or tissues"/>
</dbReference>
<dbReference type="ExpressionAtlas" id="Q5FC79">
    <property type="expression patterns" value="baseline and differential"/>
</dbReference>
<dbReference type="GO" id="GO:0005743">
    <property type="term" value="C:mitochondrial inner membrane"/>
    <property type="evidence" value="ECO:0000318"/>
    <property type="project" value="GO_Central"/>
</dbReference>
<dbReference type="GO" id="GO:0015075">
    <property type="term" value="F:monoatomic ion transmembrane transporter activity"/>
    <property type="evidence" value="ECO:0007669"/>
    <property type="project" value="InterPro"/>
</dbReference>
<dbReference type="GO" id="GO:0022857">
    <property type="term" value="F:transmembrane transporter activity"/>
    <property type="evidence" value="ECO:0000318"/>
    <property type="project" value="GO_Central"/>
</dbReference>
<dbReference type="GO" id="GO:0006865">
    <property type="term" value="P:amino acid transport"/>
    <property type="evidence" value="ECO:0007669"/>
    <property type="project" value="UniProtKB-KW"/>
</dbReference>
<dbReference type="GO" id="GO:1990542">
    <property type="term" value="P:mitochondrial transmembrane transport"/>
    <property type="evidence" value="ECO:0000318"/>
    <property type="project" value="GO_Central"/>
</dbReference>
<dbReference type="InterPro" id="IPR004686">
    <property type="entry name" value="Mtc"/>
</dbReference>
<dbReference type="NCBIfam" id="TIGR00798">
    <property type="entry name" value="mtc"/>
    <property type="match status" value="1"/>
</dbReference>
<dbReference type="PANTHER" id="PTHR11153">
    <property type="entry name" value="SIDEROFLEXIN"/>
    <property type="match status" value="1"/>
</dbReference>
<dbReference type="PANTHER" id="PTHR11153:SF6">
    <property type="entry name" value="SIDEROFLEXIN-5"/>
    <property type="match status" value="1"/>
</dbReference>
<dbReference type="Pfam" id="PF03820">
    <property type="entry name" value="SFXNs"/>
    <property type="match status" value="1"/>
</dbReference>
<evidence type="ECO:0000250" key="1">
    <source>
        <dbReference type="UniProtKB" id="Q8CFD0"/>
    </source>
</evidence>
<evidence type="ECO:0000250" key="2">
    <source>
        <dbReference type="UniProtKB" id="Q925N0"/>
    </source>
</evidence>
<evidence type="ECO:0000250" key="3">
    <source>
        <dbReference type="UniProtKB" id="Q9H9B4"/>
    </source>
</evidence>
<evidence type="ECO:0000255" key="4"/>
<evidence type="ECO:0000305" key="5"/>
<evidence type="ECO:0000312" key="6">
    <source>
        <dbReference type="WormBase" id="C41C4.10a"/>
    </source>
</evidence>
<keyword id="KW-0029">Amino-acid transport</keyword>
<keyword id="KW-0472">Membrane</keyword>
<keyword id="KW-0496">Mitochondrion</keyword>
<keyword id="KW-0999">Mitochondrion inner membrane</keyword>
<keyword id="KW-1185">Reference proteome</keyword>
<keyword id="KW-0812">Transmembrane</keyword>
<keyword id="KW-1133">Transmembrane helix</keyword>
<keyword id="KW-0813">Transport</keyword>
<feature type="chain" id="PRO_0000065233" description="Sideroflexin-5">
    <location>
        <begin position="1"/>
        <end position="331"/>
    </location>
</feature>
<feature type="transmembrane region" description="Helical" evidence="4">
    <location>
        <begin position="104"/>
        <end position="126"/>
    </location>
</feature>
<feature type="transmembrane region" description="Helical" evidence="4">
    <location>
        <begin position="153"/>
        <end position="175"/>
    </location>
</feature>
<feature type="transmembrane region" description="Helical" evidence="4">
    <location>
        <begin position="243"/>
        <end position="265"/>
    </location>
</feature>
<feature type="transmembrane region" description="Helical" evidence="4">
    <location>
        <begin position="278"/>
        <end position="300"/>
    </location>
</feature>
<comment type="function">
    <text evidence="3">Mitochondrial amino-acid transporter.</text>
</comment>
<comment type="catalytic activity">
    <reaction evidence="1">
        <text>citrate(in) = citrate(out)</text>
        <dbReference type="Rhea" id="RHEA:33183"/>
        <dbReference type="ChEBI" id="CHEBI:16947"/>
    </reaction>
</comment>
<comment type="subcellular location">
    <subcellularLocation>
        <location evidence="2">Mitochondrion inner membrane</location>
        <topology evidence="4">Multi-pass membrane protein</topology>
    </subcellularLocation>
</comment>
<comment type="similarity">
    <text evidence="5">Belongs to the sideroflexin family.</text>
</comment>
<organism>
    <name type="scientific">Caenorhabditis elegans</name>
    <dbReference type="NCBI Taxonomy" id="6239"/>
    <lineage>
        <taxon>Eukaryota</taxon>
        <taxon>Metazoa</taxon>
        <taxon>Ecdysozoa</taxon>
        <taxon>Nematoda</taxon>
        <taxon>Chromadorea</taxon>
        <taxon>Rhabditida</taxon>
        <taxon>Rhabditina</taxon>
        <taxon>Rhabditomorpha</taxon>
        <taxon>Rhabditoidea</taxon>
        <taxon>Rhabditidae</taxon>
        <taxon>Peloderinae</taxon>
        <taxon>Caenorhabditis</taxon>
    </lineage>
</organism>
<protein>
    <recommendedName>
        <fullName evidence="5">Sideroflexin-5</fullName>
    </recommendedName>
</protein>
<name>SFXN5_CAEEL</name>
<gene>
    <name evidence="6" type="primary">sfxn-5</name>
    <name type="ORF">C41C4.10</name>
</gene>
<proteinExistence type="inferred from homology"/>
<reference key="1">
    <citation type="journal article" date="1998" name="Science">
        <title>Genome sequence of the nematode C. elegans: a platform for investigating biology.</title>
        <authorList>
            <consortium name="The C. elegans sequencing consortium"/>
        </authorList>
    </citation>
    <scope>NUCLEOTIDE SEQUENCE [LARGE SCALE GENOMIC DNA]</scope>
    <source>
        <strain>Bristol N2</strain>
    </source>
</reference>
<sequence>MALDETLFGYPIYPKFKLGEPRFPQDTFLGRYLHCLDVIDPRTLFASNKKLEESLELLNSFKAGTATNVPDKSLWEAQKLKSAILHPDTGEKVLPPFRMSGFVPFGWITVTGMLLPNPSWPTLLFWQWMNQSHNACVNYANRNATQPQPLSKYIGAYGAAVTAACSISGGLTYFIKKASSLPPTTRIIIQRFVPLPATSLASSLNVICMRWNELETGIQVYEKDTGKVVGVSKVAAKQAVTDTTMVRAFLPVPLLLMPPCIMPYLERFKWVTKTQVRHIFVNAIVCTLSFAVSLPVALALFPQESAISREQLEPELQQKTKNSLLYYNKGL</sequence>
<accession>Q5FC79</accession>